<keyword id="KW-0025">Alternative splicing</keyword>
<keyword id="KW-1185">Reference proteome</keyword>
<name>IQCH_MOUSE</name>
<gene>
    <name type="primary">Iqch</name>
</gene>
<feature type="chain" id="PRO_0000282566" description="IQ domain-containing protein H">
    <location>
        <begin position="1"/>
        <end position="1071"/>
    </location>
</feature>
<feature type="domain" description="IQ" evidence="1">
    <location>
        <begin position="406"/>
        <end position="435"/>
    </location>
</feature>
<feature type="region of interest" description="Disordered" evidence="2">
    <location>
        <begin position="262"/>
        <end position="286"/>
    </location>
</feature>
<feature type="compositionally biased region" description="Basic and acidic residues" evidence="2">
    <location>
        <begin position="266"/>
        <end position="275"/>
    </location>
</feature>
<feature type="compositionally biased region" description="Basic residues" evidence="2">
    <location>
        <begin position="276"/>
        <end position="286"/>
    </location>
</feature>
<feature type="splice variant" id="VSP_024197" description="In isoform 2." evidence="4">
    <location>
        <begin position="737"/>
        <end position="970"/>
    </location>
</feature>
<feature type="sequence conflict" description="In Ref. 1; BAB31783." evidence="5" ref="1">
    <original>I</original>
    <variation>V</variation>
    <location>
        <position position="61"/>
    </location>
</feature>
<feature type="sequence conflict" description="In Ref. 1; BAC26480." evidence="5" ref="1">
    <original>F</original>
    <variation>Y</variation>
    <location>
        <position position="102"/>
    </location>
</feature>
<feature type="sequence conflict" description="In Ref. 1; BAB31783." evidence="5" ref="1">
    <original>A</original>
    <variation>S</variation>
    <location>
        <position position="442"/>
    </location>
</feature>
<feature type="sequence conflict" description="In Ref. 1; BAB31783." evidence="5" ref="1">
    <original>Y</original>
    <variation>C</variation>
    <location>
        <position position="496"/>
    </location>
</feature>
<sequence>MAQAQEDSDPIGSILIQVHEDLHQLKEKLVKFSAEETRSTLDIQNLETAIQRTEMGLKIHIDKYLGVVNQEVLMAPVKKSLESPVTSKWSIPTVIDQKSFIFPMDSDFWRPQKHRGSLLHGLRRAKPKIQLTTKVMQDPENKHHRAAVTASYGISLPHINQRKAQDKVQRLIKGSTISNLTVLPPSHRTDPHFIPIPVLQKDASKGVLSMIERGLIPPTARITFQNPPIKPQALPLHSFDEHRKVPMEASFPLALKPRPVPEEVEEPSHQIEIPKGRAKRSRGPLRRKGMKIRTPSKTRKSPWDYIFSVYNGCVDRTAPDFLAFKSRFKLIWGSIFSFLEQIEKFLKDYAISEAKIKGKSLVSLLPEFELKNKLTRNDVLAVLENPVHIQMLLNLPGQRYKGQDGKAEAATKIQATWKSYKARSSFISYRQKKWASGVIALAWLLHCHRTRLKRIVKESRQRHLENFRIRAQHLAANWSRIRTSRRTIIHIPSLGYSQYVRKHIFDLDVEQNMQLGRLCDIIDANVNVIYICSHPMTDELKLYYRKLLSLQAAVKTGYYGDRTDLQNRFRIITPEAVNVFTKHHMCLATHLMYSPKAIKRIKNLIRGEEAYIVGGILHRDDLAVADMLNVPILGSEPELVHLYSAKSGSKRIFDNANVPMPPGIYDIYTYQQMIEQLSQLVTDNLGIRRWVFKMNTEFGGNGTAFCDIPSHLQCYNWVLKERNRFGHEDWKKKWAQESALVKISEELAGILAQHVQLVNEKRFPTWRKFLHMFLTQGGVIEAYPPADSVTNLTVDMLIEPDGEVRVLSMGDQLHADGPFISSGTTMPQTSVDPQVLNSLCLQIGNICKEKDVVGYFSIDLVTFIDPSTLEQQVWTTGLNLSYSDQLAMTQLTLYLTNGHLNCSLSTLEVPRFTEDSERERKRLSIQAELAPETSRYAVMSTQLKHDNLSLIFYYVFLQMCKAHGIGYDLEDRQGTVFILYESLKRYKLGMLTIGVDLQGVLMTFARNLFIIHQEISAPDMQGETNFKTTIDDIETILGVTEENKMIFVREKQSKEEEDNLYEPVEIHSEIV</sequence>
<accession>Q9D2K4</accession>
<accession>G5E8B0</accession>
<accession>Q8C0X9</accession>
<organism>
    <name type="scientific">Mus musculus</name>
    <name type="common">Mouse</name>
    <dbReference type="NCBI Taxonomy" id="10090"/>
    <lineage>
        <taxon>Eukaryota</taxon>
        <taxon>Metazoa</taxon>
        <taxon>Chordata</taxon>
        <taxon>Craniata</taxon>
        <taxon>Vertebrata</taxon>
        <taxon>Euteleostomi</taxon>
        <taxon>Mammalia</taxon>
        <taxon>Eutheria</taxon>
        <taxon>Euarchontoglires</taxon>
        <taxon>Glires</taxon>
        <taxon>Rodentia</taxon>
        <taxon>Myomorpha</taxon>
        <taxon>Muroidea</taxon>
        <taxon>Muridae</taxon>
        <taxon>Murinae</taxon>
        <taxon>Mus</taxon>
        <taxon>Mus</taxon>
    </lineage>
</organism>
<proteinExistence type="evidence at transcript level"/>
<protein>
    <recommendedName>
        <fullName>IQ domain-containing protein H</fullName>
    </recommendedName>
</protein>
<comment type="function">
    <text evidence="3">May play a regulatory role in spermatogenesis.</text>
</comment>
<comment type="alternative products">
    <event type="alternative splicing"/>
    <isoform>
        <id>Q9D2K4-1</id>
        <name>1</name>
        <sequence type="displayed"/>
    </isoform>
    <isoform>
        <id>Q9D2K4-2</id>
        <name>2</name>
        <sequence type="described" ref="VSP_024197"/>
    </isoform>
</comment>
<comment type="tissue specificity">
    <text evidence="3">Expressed in fetal and adult testis, in the spermatocytes and spermatids but not in somatic cells.</text>
</comment>
<evidence type="ECO:0000255" key="1">
    <source>
        <dbReference type="PROSITE-ProRule" id="PRU00116"/>
    </source>
</evidence>
<evidence type="ECO:0000256" key="2">
    <source>
        <dbReference type="SAM" id="MobiDB-lite"/>
    </source>
</evidence>
<evidence type="ECO:0000269" key="3">
    <source>
    </source>
</evidence>
<evidence type="ECO:0000303" key="4">
    <source>
    </source>
</evidence>
<evidence type="ECO:0000305" key="5"/>
<dbReference type="EMBL" id="AK019535">
    <property type="protein sequence ID" value="BAB31783.1"/>
    <property type="molecule type" value="mRNA"/>
</dbReference>
<dbReference type="EMBL" id="AK029502">
    <property type="protein sequence ID" value="BAC26480.1"/>
    <property type="molecule type" value="mRNA"/>
</dbReference>
<dbReference type="EMBL" id="AC122057">
    <property type="status" value="NOT_ANNOTATED_CDS"/>
    <property type="molecule type" value="Genomic_DNA"/>
</dbReference>
<dbReference type="EMBL" id="CT010509">
    <property type="status" value="NOT_ANNOTATED_CDS"/>
    <property type="molecule type" value="Genomic_DNA"/>
</dbReference>
<dbReference type="EMBL" id="CH466522">
    <property type="protein sequence ID" value="EDL26041.1"/>
    <property type="molecule type" value="Genomic_DNA"/>
</dbReference>
<dbReference type="CCDS" id="CCDS81021.1">
    <molecule id="Q9D2K4-1"/>
</dbReference>
<dbReference type="RefSeq" id="NP_001298027.1">
    <molecule id="Q9D2K4-1"/>
    <property type="nucleotide sequence ID" value="NM_001311098.1"/>
</dbReference>
<dbReference type="RefSeq" id="NP_084344.1">
    <property type="nucleotide sequence ID" value="NM_030068.2"/>
</dbReference>
<dbReference type="FunCoup" id="Q9D2K4">
    <property type="interactions" value="16"/>
</dbReference>
<dbReference type="STRING" id="10090.ENSMUSP00000047953"/>
<dbReference type="GlyGen" id="Q9D2K4">
    <property type="glycosylation" value="1 site"/>
</dbReference>
<dbReference type="PhosphoSitePlus" id="Q9D2K4"/>
<dbReference type="PaxDb" id="10090-ENSMUSP00000047953"/>
<dbReference type="ProteomicsDB" id="268989">
    <molecule id="Q9D2K4-1"/>
</dbReference>
<dbReference type="ProteomicsDB" id="268990">
    <molecule id="Q9D2K4-2"/>
</dbReference>
<dbReference type="Antibodypedia" id="26248">
    <property type="antibodies" value="28 antibodies from 11 providers"/>
</dbReference>
<dbReference type="Ensembl" id="ENSMUST00000042322.11">
    <molecule id="Q9D2K4-1"/>
    <property type="protein sequence ID" value="ENSMUSP00000047953.5"/>
    <property type="gene ID" value="ENSMUSG00000037801.14"/>
</dbReference>
<dbReference type="Ensembl" id="ENSMUST00000080527.12">
    <molecule id="Q9D2K4-2"/>
    <property type="protein sequence ID" value="ENSMUSP00000079370.6"/>
    <property type="gene ID" value="ENSMUSG00000037801.14"/>
</dbReference>
<dbReference type="GeneID" id="78250"/>
<dbReference type="KEGG" id="mmu:78250"/>
<dbReference type="UCSC" id="uc009qbd.3">
    <molecule id="Q9D2K4-1"/>
    <property type="organism name" value="mouse"/>
</dbReference>
<dbReference type="UCSC" id="uc012guy.2">
    <molecule id="Q9D2K4-2"/>
    <property type="organism name" value="mouse"/>
</dbReference>
<dbReference type="AGR" id="MGI:1925500"/>
<dbReference type="CTD" id="64799"/>
<dbReference type="MGI" id="MGI:1925500">
    <property type="gene designation" value="Iqch"/>
</dbReference>
<dbReference type="VEuPathDB" id="HostDB:ENSMUSG00000037801"/>
<dbReference type="eggNOG" id="ENOG502QSF3">
    <property type="taxonomic scope" value="Eukaryota"/>
</dbReference>
<dbReference type="GeneTree" id="ENSGT00390000008908"/>
<dbReference type="InParanoid" id="Q9D2K4"/>
<dbReference type="OMA" id="MHEFIIR"/>
<dbReference type="OrthoDB" id="2117703at2759"/>
<dbReference type="PhylomeDB" id="Q9D2K4"/>
<dbReference type="TreeFam" id="TF328488"/>
<dbReference type="BioGRID-ORCS" id="78250">
    <property type="hits" value="2 hits in 76 CRISPR screens"/>
</dbReference>
<dbReference type="PRO" id="PR:Q9D2K4"/>
<dbReference type="Proteomes" id="UP000000589">
    <property type="component" value="Chromosome 9"/>
</dbReference>
<dbReference type="RNAct" id="Q9D2K4">
    <property type="molecule type" value="protein"/>
</dbReference>
<dbReference type="Bgee" id="ENSMUSG00000037801">
    <property type="expression patterns" value="Expressed in spermatid and 9 other cell types or tissues"/>
</dbReference>
<dbReference type="ExpressionAtlas" id="Q9D2K4">
    <property type="expression patterns" value="baseline and differential"/>
</dbReference>
<dbReference type="GO" id="GO:0016607">
    <property type="term" value="C:nuclear speck"/>
    <property type="evidence" value="ECO:0000314"/>
    <property type="project" value="MGI"/>
</dbReference>
<dbReference type="GO" id="GO:0010467">
    <property type="term" value="P:gene expression"/>
    <property type="evidence" value="ECO:0000315"/>
    <property type="project" value="MGI"/>
</dbReference>
<dbReference type="GO" id="GO:0140742">
    <property type="term" value="P:lncRNA transcription"/>
    <property type="evidence" value="ECO:0000315"/>
    <property type="project" value="MGI"/>
</dbReference>
<dbReference type="GO" id="GO:0007338">
    <property type="term" value="P:single fertilization"/>
    <property type="evidence" value="ECO:0000315"/>
    <property type="project" value="MGI"/>
</dbReference>
<dbReference type="CDD" id="cd23767">
    <property type="entry name" value="IQCD"/>
    <property type="match status" value="1"/>
</dbReference>
<dbReference type="InterPro" id="IPR056855">
    <property type="entry name" value="ATP-grasp_IQCH"/>
</dbReference>
<dbReference type="InterPro" id="IPR038752">
    <property type="entry name" value="IQCH"/>
</dbReference>
<dbReference type="PANTHER" id="PTHR14465">
    <property type="entry name" value="IQ DOMAIN-CONTAINING PROTEIN H"/>
    <property type="match status" value="1"/>
</dbReference>
<dbReference type="PANTHER" id="PTHR14465:SF0">
    <property type="entry name" value="IQ DOMAIN-CONTAINING PROTEIN H"/>
    <property type="match status" value="1"/>
</dbReference>
<dbReference type="Pfam" id="PF24923">
    <property type="entry name" value="ATP-grasp_IQCH"/>
    <property type="match status" value="1"/>
</dbReference>
<dbReference type="PROSITE" id="PS50096">
    <property type="entry name" value="IQ"/>
    <property type="match status" value="1"/>
</dbReference>
<reference key="1">
    <citation type="journal article" date="2005" name="Science">
        <title>The transcriptional landscape of the mammalian genome.</title>
        <authorList>
            <person name="Carninci P."/>
            <person name="Kasukawa T."/>
            <person name="Katayama S."/>
            <person name="Gough J."/>
            <person name="Frith M.C."/>
            <person name="Maeda N."/>
            <person name="Oyama R."/>
            <person name="Ravasi T."/>
            <person name="Lenhard B."/>
            <person name="Wells C."/>
            <person name="Kodzius R."/>
            <person name="Shimokawa K."/>
            <person name="Bajic V.B."/>
            <person name="Brenner S.E."/>
            <person name="Batalov S."/>
            <person name="Forrest A.R."/>
            <person name="Zavolan M."/>
            <person name="Davis M.J."/>
            <person name="Wilming L.G."/>
            <person name="Aidinis V."/>
            <person name="Allen J.E."/>
            <person name="Ambesi-Impiombato A."/>
            <person name="Apweiler R."/>
            <person name="Aturaliya R.N."/>
            <person name="Bailey T.L."/>
            <person name="Bansal M."/>
            <person name="Baxter L."/>
            <person name="Beisel K.W."/>
            <person name="Bersano T."/>
            <person name="Bono H."/>
            <person name="Chalk A.M."/>
            <person name="Chiu K.P."/>
            <person name="Choudhary V."/>
            <person name="Christoffels A."/>
            <person name="Clutterbuck D.R."/>
            <person name="Crowe M.L."/>
            <person name="Dalla E."/>
            <person name="Dalrymple B.P."/>
            <person name="de Bono B."/>
            <person name="Della Gatta G."/>
            <person name="di Bernardo D."/>
            <person name="Down T."/>
            <person name="Engstrom P."/>
            <person name="Fagiolini M."/>
            <person name="Faulkner G."/>
            <person name="Fletcher C.F."/>
            <person name="Fukushima T."/>
            <person name="Furuno M."/>
            <person name="Futaki S."/>
            <person name="Gariboldi M."/>
            <person name="Georgii-Hemming P."/>
            <person name="Gingeras T.R."/>
            <person name="Gojobori T."/>
            <person name="Green R.E."/>
            <person name="Gustincich S."/>
            <person name="Harbers M."/>
            <person name="Hayashi Y."/>
            <person name="Hensch T.K."/>
            <person name="Hirokawa N."/>
            <person name="Hill D."/>
            <person name="Huminiecki L."/>
            <person name="Iacono M."/>
            <person name="Ikeo K."/>
            <person name="Iwama A."/>
            <person name="Ishikawa T."/>
            <person name="Jakt M."/>
            <person name="Kanapin A."/>
            <person name="Katoh M."/>
            <person name="Kawasawa Y."/>
            <person name="Kelso J."/>
            <person name="Kitamura H."/>
            <person name="Kitano H."/>
            <person name="Kollias G."/>
            <person name="Krishnan S.P."/>
            <person name="Kruger A."/>
            <person name="Kummerfeld S.K."/>
            <person name="Kurochkin I.V."/>
            <person name="Lareau L.F."/>
            <person name="Lazarevic D."/>
            <person name="Lipovich L."/>
            <person name="Liu J."/>
            <person name="Liuni S."/>
            <person name="McWilliam S."/>
            <person name="Madan Babu M."/>
            <person name="Madera M."/>
            <person name="Marchionni L."/>
            <person name="Matsuda H."/>
            <person name="Matsuzawa S."/>
            <person name="Miki H."/>
            <person name="Mignone F."/>
            <person name="Miyake S."/>
            <person name="Morris K."/>
            <person name="Mottagui-Tabar S."/>
            <person name="Mulder N."/>
            <person name="Nakano N."/>
            <person name="Nakauchi H."/>
            <person name="Ng P."/>
            <person name="Nilsson R."/>
            <person name="Nishiguchi S."/>
            <person name="Nishikawa S."/>
            <person name="Nori F."/>
            <person name="Ohara O."/>
            <person name="Okazaki Y."/>
            <person name="Orlando V."/>
            <person name="Pang K.C."/>
            <person name="Pavan W.J."/>
            <person name="Pavesi G."/>
            <person name="Pesole G."/>
            <person name="Petrovsky N."/>
            <person name="Piazza S."/>
            <person name="Reed J."/>
            <person name="Reid J.F."/>
            <person name="Ring B.Z."/>
            <person name="Ringwald M."/>
            <person name="Rost B."/>
            <person name="Ruan Y."/>
            <person name="Salzberg S.L."/>
            <person name="Sandelin A."/>
            <person name="Schneider C."/>
            <person name="Schoenbach C."/>
            <person name="Sekiguchi K."/>
            <person name="Semple C.A."/>
            <person name="Seno S."/>
            <person name="Sessa L."/>
            <person name="Sheng Y."/>
            <person name="Shibata Y."/>
            <person name="Shimada H."/>
            <person name="Shimada K."/>
            <person name="Silva D."/>
            <person name="Sinclair B."/>
            <person name="Sperling S."/>
            <person name="Stupka E."/>
            <person name="Sugiura K."/>
            <person name="Sultana R."/>
            <person name="Takenaka Y."/>
            <person name="Taki K."/>
            <person name="Tammoja K."/>
            <person name="Tan S.L."/>
            <person name="Tang S."/>
            <person name="Taylor M.S."/>
            <person name="Tegner J."/>
            <person name="Teichmann S.A."/>
            <person name="Ueda H.R."/>
            <person name="van Nimwegen E."/>
            <person name="Verardo R."/>
            <person name="Wei C.L."/>
            <person name="Yagi K."/>
            <person name="Yamanishi H."/>
            <person name="Zabarovsky E."/>
            <person name="Zhu S."/>
            <person name="Zimmer A."/>
            <person name="Hide W."/>
            <person name="Bult C."/>
            <person name="Grimmond S.M."/>
            <person name="Teasdale R.D."/>
            <person name="Liu E.T."/>
            <person name="Brusic V."/>
            <person name="Quackenbush J."/>
            <person name="Wahlestedt C."/>
            <person name="Mattick J.S."/>
            <person name="Hume D.A."/>
            <person name="Kai C."/>
            <person name="Sasaki D."/>
            <person name="Tomaru Y."/>
            <person name="Fukuda S."/>
            <person name="Kanamori-Katayama M."/>
            <person name="Suzuki M."/>
            <person name="Aoki J."/>
            <person name="Arakawa T."/>
            <person name="Iida J."/>
            <person name="Imamura K."/>
            <person name="Itoh M."/>
            <person name="Kato T."/>
            <person name="Kawaji H."/>
            <person name="Kawagashira N."/>
            <person name="Kawashima T."/>
            <person name="Kojima M."/>
            <person name="Kondo S."/>
            <person name="Konno H."/>
            <person name="Nakano K."/>
            <person name="Ninomiya N."/>
            <person name="Nishio T."/>
            <person name="Okada M."/>
            <person name="Plessy C."/>
            <person name="Shibata K."/>
            <person name="Shiraki T."/>
            <person name="Suzuki S."/>
            <person name="Tagami M."/>
            <person name="Waki K."/>
            <person name="Watahiki A."/>
            <person name="Okamura-Oho Y."/>
            <person name="Suzuki H."/>
            <person name="Kawai J."/>
            <person name="Hayashizaki Y."/>
        </authorList>
    </citation>
    <scope>NUCLEOTIDE SEQUENCE [LARGE SCALE MRNA] (ISOFORMS 1 AND 2)</scope>
    <source>
        <strain>C57BL/6J</strain>
        <tissue>Testis</tissue>
    </source>
</reference>
<reference key="2">
    <citation type="journal article" date="2009" name="PLoS Biol.">
        <title>Lineage-specific biology revealed by a finished genome assembly of the mouse.</title>
        <authorList>
            <person name="Church D.M."/>
            <person name="Goodstadt L."/>
            <person name="Hillier L.W."/>
            <person name="Zody M.C."/>
            <person name="Goldstein S."/>
            <person name="She X."/>
            <person name="Bult C.J."/>
            <person name="Agarwala R."/>
            <person name="Cherry J.L."/>
            <person name="DiCuccio M."/>
            <person name="Hlavina W."/>
            <person name="Kapustin Y."/>
            <person name="Meric P."/>
            <person name="Maglott D."/>
            <person name="Birtle Z."/>
            <person name="Marques A.C."/>
            <person name="Graves T."/>
            <person name="Zhou S."/>
            <person name="Teague B."/>
            <person name="Potamousis K."/>
            <person name="Churas C."/>
            <person name="Place M."/>
            <person name="Herschleb J."/>
            <person name="Runnheim R."/>
            <person name="Forrest D."/>
            <person name="Amos-Landgraf J."/>
            <person name="Schwartz D.C."/>
            <person name="Cheng Z."/>
            <person name="Lindblad-Toh K."/>
            <person name="Eichler E.E."/>
            <person name="Ponting C.P."/>
        </authorList>
    </citation>
    <scope>NUCLEOTIDE SEQUENCE [LARGE SCALE GENOMIC DNA]</scope>
    <source>
        <strain>C57BL/6J</strain>
    </source>
</reference>
<reference key="3">
    <citation type="submission" date="2005-07" db="EMBL/GenBank/DDBJ databases">
        <authorList>
            <person name="Mural R.J."/>
            <person name="Adams M.D."/>
            <person name="Myers E.W."/>
            <person name="Smith H.O."/>
            <person name="Venter J.C."/>
        </authorList>
    </citation>
    <scope>NUCLEOTIDE SEQUENCE [LARGE SCALE GENOMIC DNA]</scope>
</reference>
<reference key="4">
    <citation type="journal article" date="2005" name="Asian J. Androl.">
        <title>Identification of a novel testis-specific gene and its potential roles in testis development/spermatogenesis.</title>
        <authorList>
            <person name="Yin L.L."/>
            <person name="Li J.M."/>
            <person name="Zhou Z.M."/>
            <person name="Sha J.H."/>
        </authorList>
    </citation>
    <scope>FUNCTION</scope>
    <scope>TISSUE SPECIFICITY</scope>
</reference>